<organism>
    <name type="scientific">Homo sapiens</name>
    <name type="common">Human</name>
    <dbReference type="NCBI Taxonomy" id="9606"/>
    <lineage>
        <taxon>Eukaryota</taxon>
        <taxon>Metazoa</taxon>
        <taxon>Chordata</taxon>
        <taxon>Craniata</taxon>
        <taxon>Vertebrata</taxon>
        <taxon>Euteleostomi</taxon>
        <taxon>Mammalia</taxon>
        <taxon>Eutheria</taxon>
        <taxon>Euarchontoglires</taxon>
        <taxon>Primates</taxon>
        <taxon>Haplorrhini</taxon>
        <taxon>Catarrhini</taxon>
        <taxon>Hominidae</taxon>
        <taxon>Homo</taxon>
    </lineage>
</organism>
<name>DJC12_HUMAN</name>
<gene>
    <name type="primary">DNAJC12</name>
    <name type="synonym">JDP1</name>
</gene>
<sequence>MDAILNYRSEDTEDYYTLLGCDELSSVEQILAEFKVRALECHPDKHPENPKAVETFQKLQKAKEILTNEESRARYDHWRRSQMSMPFQQWEALNDSVKTSMHWVVRGKKDLMLEESDKTHTTKMENEECNEQRERKKEELASTAEKTEQKEPKPLEKSVSPQNSDSSGFADVNGWHLRFRWSKDAPSELLRKFRNYEI</sequence>
<evidence type="ECO:0000250" key="1">
    <source>
        <dbReference type="UniProtKB" id="Q9R022"/>
    </source>
</evidence>
<evidence type="ECO:0000255" key="2">
    <source>
        <dbReference type="PROSITE-ProRule" id="PRU00286"/>
    </source>
</evidence>
<evidence type="ECO:0000256" key="3">
    <source>
        <dbReference type="SAM" id="MobiDB-lite"/>
    </source>
</evidence>
<evidence type="ECO:0000269" key="4">
    <source>
    </source>
</evidence>
<evidence type="ECO:0000269" key="5">
    <source>
    </source>
</evidence>
<evidence type="ECO:0000269" key="6">
    <source>
    </source>
</evidence>
<evidence type="ECO:0000269" key="7">
    <source>
    </source>
</evidence>
<evidence type="ECO:0000269" key="8">
    <source>
    </source>
</evidence>
<evidence type="ECO:0000269" key="9">
    <source>
    </source>
</evidence>
<evidence type="ECO:0000269" key="10">
    <source>
    </source>
</evidence>
<evidence type="ECO:0000269" key="11">
    <source>
    </source>
</evidence>
<evidence type="ECO:0000269" key="12">
    <source>
    </source>
</evidence>
<evidence type="ECO:0000303" key="13">
    <source>
    </source>
</evidence>
<evidence type="ECO:0007744" key="14">
    <source>
    </source>
</evidence>
<evidence type="ECO:0007744" key="15">
    <source>
    </source>
</evidence>
<evidence type="ECO:0007829" key="16">
    <source>
        <dbReference type="PDB" id="2CTQ"/>
    </source>
</evidence>
<feature type="chain" id="PRO_0000071066" description="DnaJ homolog subfamily C member 12">
    <location>
        <begin position="1"/>
        <end position="198"/>
    </location>
</feature>
<feature type="domain" description="J" evidence="2">
    <location>
        <begin position="14"/>
        <end position="79"/>
    </location>
</feature>
<feature type="region of interest" description="Disordered" evidence="3">
    <location>
        <begin position="114"/>
        <end position="169"/>
    </location>
</feature>
<feature type="compositionally biased region" description="Basic and acidic residues" evidence="3">
    <location>
        <begin position="114"/>
        <end position="156"/>
    </location>
</feature>
<feature type="modified residue" description="N-acetylmethionine" evidence="14">
    <location>
        <position position="1"/>
    </location>
</feature>
<feature type="modified residue" description="Phosphoserine" evidence="15">
    <location>
        <position position="160"/>
    </location>
</feature>
<feature type="modified residue" description="Phosphoserine" evidence="1">
    <location>
        <position position="166"/>
    </location>
</feature>
<feature type="modified residue" description="Phosphoserine" evidence="1">
    <location>
        <position position="182"/>
    </location>
</feature>
<feature type="splice variant" id="VSP_001295" description="In isoform B." evidence="13">
    <original>SMHWVVRG</original>
    <variation>VGFSLGAT</variation>
    <location>
        <begin position="100"/>
        <end position="107"/>
    </location>
</feature>
<feature type="splice variant" id="VSP_001296" description="In isoform B." evidence="13">
    <location>
        <begin position="108"/>
        <end position="198"/>
    </location>
</feature>
<feature type="sequence variant" id="VAR_090211" description="In HPANBH4; likely pathogenic." evidence="12">
    <original>A</original>
    <variation>E</variation>
    <location>
        <position position="62"/>
    </location>
</feature>
<feature type="sequence variant" id="VAR_090212" description="In HPANBH4; likely pathogenic." evidence="6 12">
    <location>
        <begin position="72"/>
        <end position="198"/>
    </location>
</feature>
<feature type="sequence variant" id="VAR_078797" description="In HPANBH4; uncertain significance; decreased protein levels in homozygous patient cells; probably affects PAH stability; PAH activity is reduced in homozygous patient cells; dbSNP:rs1035794099." evidence="5">
    <original>R</original>
    <variation>P</variation>
    <location>
        <position position="72"/>
    </location>
</feature>
<feature type="sequence variant" id="VAR_090213" description="In HPANBH4; likely pathogenic." evidence="11">
    <location>
        <begin position="79"/>
        <end position="198"/>
    </location>
</feature>
<feature type="sequence variant" id="VAR_090214" description="In HPANBH4; uncertain significance; dbSNP:rs1373961824." evidence="10">
    <original>H</original>
    <variation>Q</variation>
    <location>
        <position position="102"/>
    </location>
</feature>
<feature type="sequence variant" id="VAR_090215" description="In HPANBH4; likely pathogenic; dbSNP:rs1841794635." evidence="9">
    <original>W</original>
    <variation>C</variation>
    <location>
        <position position="103"/>
    </location>
</feature>
<feature type="sequence variant" id="VAR_048913" description="In dbSNP:rs35690028.">
    <original>M</original>
    <variation>I</variation>
    <location>
        <position position="124"/>
    </location>
</feature>
<feature type="sequence variant" id="VAR_048914" description="In dbSNP:rs36099123.">
    <original>C</original>
    <variation>W</variation>
    <location>
        <position position="129"/>
    </location>
</feature>
<feature type="sequence variant" id="VAR_090216" description="In HPANBH4; likely pathogenic; decreased mRNA and protein levels in homozygous patient cells; probably affects PAH stability; PAH levels and activity are severely reduced in homozygous patient cells." evidence="9">
    <location>
        <begin position="175"/>
        <end position="198"/>
    </location>
</feature>
<feature type="helix" evidence="16">
    <location>
        <begin position="15"/>
        <end position="18"/>
    </location>
</feature>
<feature type="helix" evidence="16">
    <location>
        <begin position="27"/>
        <end position="39"/>
    </location>
</feature>
<feature type="turn" evidence="16">
    <location>
        <begin position="43"/>
        <end position="45"/>
    </location>
</feature>
<feature type="helix" evidence="16">
    <location>
        <begin position="52"/>
        <end position="67"/>
    </location>
</feature>
<feature type="helix" evidence="16">
    <location>
        <begin position="69"/>
        <end position="81"/>
    </location>
</feature>
<feature type="helix" evidence="16">
    <location>
        <begin position="87"/>
        <end position="95"/>
    </location>
</feature>
<dbReference type="EMBL" id="AF176012">
    <property type="protein sequence ID" value="AAD52650.1"/>
    <property type="molecule type" value="mRNA"/>
</dbReference>
<dbReference type="EMBL" id="AF176013">
    <property type="protein sequence ID" value="AAD52651.1"/>
    <property type="molecule type" value="mRNA"/>
</dbReference>
<dbReference type="EMBL" id="AL133551">
    <property type="status" value="NOT_ANNOTATED_CDS"/>
    <property type="molecule type" value="Genomic_DNA"/>
</dbReference>
<dbReference type="EMBL" id="CH471083">
    <property type="protein sequence ID" value="EAW54257.1"/>
    <property type="molecule type" value="Genomic_DNA"/>
</dbReference>
<dbReference type="EMBL" id="BC017018">
    <property type="protein sequence ID" value="AAH17018.1"/>
    <property type="molecule type" value="mRNA"/>
</dbReference>
<dbReference type="CCDS" id="CCDS7271.1">
    <molecule id="Q9UKB3-1"/>
</dbReference>
<dbReference type="CCDS" id="CCDS7272.1">
    <molecule id="Q9UKB3-2"/>
</dbReference>
<dbReference type="RefSeq" id="NP_068572.1">
    <molecule id="Q9UKB3-1"/>
    <property type="nucleotide sequence ID" value="NM_021800.3"/>
</dbReference>
<dbReference type="RefSeq" id="NP_957714.1">
    <molecule id="Q9UKB3-2"/>
    <property type="nucleotide sequence ID" value="NM_201262.2"/>
</dbReference>
<dbReference type="PDB" id="2CTQ">
    <property type="method" value="NMR"/>
    <property type="chains" value="A=1-99"/>
</dbReference>
<dbReference type="PDBsum" id="2CTQ"/>
<dbReference type="EMDB" id="EMD-18058"/>
<dbReference type="EMDB" id="EMD-18289"/>
<dbReference type="SMR" id="Q9UKB3"/>
<dbReference type="BioGRID" id="121150">
    <property type="interactions" value="57"/>
</dbReference>
<dbReference type="FunCoup" id="Q9UKB3">
    <property type="interactions" value="884"/>
</dbReference>
<dbReference type="IntAct" id="Q9UKB3">
    <property type="interactions" value="30"/>
</dbReference>
<dbReference type="STRING" id="9606.ENSP00000225171"/>
<dbReference type="GlyGen" id="Q9UKB3">
    <property type="glycosylation" value="1 site, 1 O-linked glycan (1 site)"/>
</dbReference>
<dbReference type="iPTMnet" id="Q9UKB3"/>
<dbReference type="PhosphoSitePlus" id="Q9UKB3"/>
<dbReference type="BioMuta" id="DNAJC12"/>
<dbReference type="DMDM" id="28201819"/>
<dbReference type="jPOST" id="Q9UKB3"/>
<dbReference type="MassIVE" id="Q9UKB3"/>
<dbReference type="PaxDb" id="9606-ENSP00000225171"/>
<dbReference type="PeptideAtlas" id="Q9UKB3"/>
<dbReference type="ProteomicsDB" id="84763">
    <molecule id="Q9UKB3-1"/>
</dbReference>
<dbReference type="ProteomicsDB" id="84764">
    <molecule id="Q9UKB3-2"/>
</dbReference>
<dbReference type="Pumba" id="Q9UKB3"/>
<dbReference type="Antibodypedia" id="28382">
    <property type="antibodies" value="87 antibodies from 22 providers"/>
</dbReference>
<dbReference type="DNASU" id="56521"/>
<dbReference type="Ensembl" id="ENST00000225171.7">
    <molecule id="Q9UKB3-1"/>
    <property type="protein sequence ID" value="ENSP00000225171.2"/>
    <property type="gene ID" value="ENSG00000108176.15"/>
</dbReference>
<dbReference type="Ensembl" id="ENST00000339758.7">
    <molecule id="Q9UKB3-2"/>
    <property type="protein sequence ID" value="ENSP00000343575.6"/>
    <property type="gene ID" value="ENSG00000108176.15"/>
</dbReference>
<dbReference type="GeneID" id="56521"/>
<dbReference type="KEGG" id="hsa:56521"/>
<dbReference type="MANE-Select" id="ENST00000225171.7">
    <property type="protein sequence ID" value="ENSP00000225171.2"/>
    <property type="RefSeq nucleotide sequence ID" value="NM_021800.3"/>
    <property type="RefSeq protein sequence ID" value="NP_068572.1"/>
</dbReference>
<dbReference type="UCSC" id="uc001jnb.4">
    <molecule id="Q9UKB3-1"/>
    <property type="organism name" value="human"/>
</dbReference>
<dbReference type="AGR" id="HGNC:28908"/>
<dbReference type="CTD" id="56521"/>
<dbReference type="DisGeNET" id="56521"/>
<dbReference type="GeneCards" id="DNAJC12"/>
<dbReference type="HGNC" id="HGNC:28908">
    <property type="gene designation" value="DNAJC12"/>
</dbReference>
<dbReference type="HPA" id="ENSG00000108176">
    <property type="expression patterns" value="Tissue enhanced (adrenal gland, brain, liver)"/>
</dbReference>
<dbReference type="MalaCards" id="DNAJC12"/>
<dbReference type="MIM" id="606060">
    <property type="type" value="gene"/>
</dbReference>
<dbReference type="MIM" id="617384">
    <property type="type" value="phenotype"/>
</dbReference>
<dbReference type="neXtProt" id="NX_Q9UKB3"/>
<dbReference type="OpenTargets" id="ENSG00000108176"/>
<dbReference type="Orphanet" id="508523">
    <property type="disease" value="Hyperphenylalaninemia due to DNAJC12 deficiency"/>
</dbReference>
<dbReference type="PharmGKB" id="PA134931354"/>
<dbReference type="VEuPathDB" id="HostDB:ENSG00000108176"/>
<dbReference type="eggNOG" id="KOG0691">
    <property type="taxonomic scope" value="Eukaryota"/>
</dbReference>
<dbReference type="GeneTree" id="ENSGT00940000159378"/>
<dbReference type="HOGENOM" id="CLU_2313030_0_0_1"/>
<dbReference type="InParanoid" id="Q9UKB3"/>
<dbReference type="OrthoDB" id="436519at2759"/>
<dbReference type="PAN-GO" id="Q9UKB3">
    <property type="GO annotations" value="1 GO annotation based on evolutionary models"/>
</dbReference>
<dbReference type="PhylomeDB" id="Q9UKB3"/>
<dbReference type="TreeFam" id="TF105171"/>
<dbReference type="PathwayCommons" id="Q9UKB3"/>
<dbReference type="SignaLink" id="Q9UKB3"/>
<dbReference type="BioGRID-ORCS" id="56521">
    <property type="hits" value="9 hits in 1155 CRISPR screens"/>
</dbReference>
<dbReference type="ChiTaRS" id="DNAJC12">
    <property type="organism name" value="human"/>
</dbReference>
<dbReference type="EvolutionaryTrace" id="Q9UKB3"/>
<dbReference type="GenomeRNAi" id="56521"/>
<dbReference type="Pharos" id="Q9UKB3">
    <property type="development level" value="Tbio"/>
</dbReference>
<dbReference type="PRO" id="PR:Q9UKB3"/>
<dbReference type="Proteomes" id="UP000005640">
    <property type="component" value="Chromosome 10"/>
</dbReference>
<dbReference type="RNAct" id="Q9UKB3">
    <property type="molecule type" value="protein"/>
</dbReference>
<dbReference type="Bgee" id="ENSG00000108176">
    <property type="expression patterns" value="Expressed in islet of Langerhans and 167 other cell types or tissues"/>
</dbReference>
<dbReference type="ExpressionAtlas" id="Q9UKB3">
    <property type="expression patterns" value="baseline and differential"/>
</dbReference>
<dbReference type="GO" id="GO:0005737">
    <property type="term" value="C:cytoplasm"/>
    <property type="evidence" value="ECO:0000314"/>
    <property type="project" value="UniProtKB"/>
</dbReference>
<dbReference type="CDD" id="cd06257">
    <property type="entry name" value="DnaJ"/>
    <property type="match status" value="1"/>
</dbReference>
<dbReference type="FunFam" id="1.10.287.110:FF:000049">
    <property type="entry name" value="DnaJ homolog subfamily C member 12"/>
    <property type="match status" value="1"/>
</dbReference>
<dbReference type="Gene3D" id="1.10.287.110">
    <property type="entry name" value="DnaJ domain"/>
    <property type="match status" value="1"/>
</dbReference>
<dbReference type="InterPro" id="IPR001623">
    <property type="entry name" value="DnaJ_domain"/>
</dbReference>
<dbReference type="InterPro" id="IPR036869">
    <property type="entry name" value="J_dom_sf"/>
</dbReference>
<dbReference type="InterPro" id="IPR029827">
    <property type="entry name" value="JDP1-like"/>
</dbReference>
<dbReference type="PANTHER" id="PTHR44500">
    <property type="entry name" value="DNAJ HOMOLOG SUBFAMILY C MEMBER 12"/>
    <property type="match status" value="1"/>
</dbReference>
<dbReference type="PANTHER" id="PTHR44500:SF1">
    <property type="entry name" value="DNAJ HOMOLOG SUBFAMILY C MEMBER 12"/>
    <property type="match status" value="1"/>
</dbReference>
<dbReference type="Pfam" id="PF00226">
    <property type="entry name" value="DnaJ"/>
    <property type="match status" value="1"/>
</dbReference>
<dbReference type="PRINTS" id="PR00625">
    <property type="entry name" value="JDOMAIN"/>
</dbReference>
<dbReference type="SMART" id="SM00271">
    <property type="entry name" value="DnaJ"/>
    <property type="match status" value="1"/>
</dbReference>
<dbReference type="SUPFAM" id="SSF46565">
    <property type="entry name" value="Chaperone J-domain"/>
    <property type="match status" value="1"/>
</dbReference>
<dbReference type="PROSITE" id="PS50076">
    <property type="entry name" value="DNAJ_2"/>
    <property type="match status" value="1"/>
</dbReference>
<reference key="1">
    <citation type="journal article" date="2000" name="Biochim. Biophys. Acta">
        <title>Characterization of JDP genes, an evolutionarily conserved J domain-only protein family, from human and moths.</title>
        <authorList>
            <person name="Lee J."/>
            <person name="Hahn Y."/>
            <person name="Yun J.H."/>
            <person name="Mita K."/>
            <person name="Chung J.H."/>
        </authorList>
    </citation>
    <scope>NUCLEOTIDE SEQUENCE [MRNA] (ISOFORMS A AND B)</scope>
</reference>
<reference key="2">
    <citation type="journal article" date="2004" name="Nature">
        <title>The DNA sequence and comparative analysis of human chromosome 10.</title>
        <authorList>
            <person name="Deloukas P."/>
            <person name="Earthrowl M.E."/>
            <person name="Grafham D.V."/>
            <person name="Rubenfield M."/>
            <person name="French L."/>
            <person name="Steward C.A."/>
            <person name="Sims S.K."/>
            <person name="Jones M.C."/>
            <person name="Searle S."/>
            <person name="Scott C."/>
            <person name="Howe K."/>
            <person name="Hunt S.E."/>
            <person name="Andrews T.D."/>
            <person name="Gilbert J.G.R."/>
            <person name="Swarbreck D."/>
            <person name="Ashurst J.L."/>
            <person name="Taylor A."/>
            <person name="Battles J."/>
            <person name="Bird C.P."/>
            <person name="Ainscough R."/>
            <person name="Almeida J.P."/>
            <person name="Ashwell R.I.S."/>
            <person name="Ambrose K.D."/>
            <person name="Babbage A.K."/>
            <person name="Bagguley C.L."/>
            <person name="Bailey J."/>
            <person name="Banerjee R."/>
            <person name="Bates K."/>
            <person name="Beasley H."/>
            <person name="Bray-Allen S."/>
            <person name="Brown A.J."/>
            <person name="Brown J.Y."/>
            <person name="Burford D.C."/>
            <person name="Burrill W."/>
            <person name="Burton J."/>
            <person name="Cahill P."/>
            <person name="Camire D."/>
            <person name="Carter N.P."/>
            <person name="Chapman J.C."/>
            <person name="Clark S.Y."/>
            <person name="Clarke G."/>
            <person name="Clee C.M."/>
            <person name="Clegg S."/>
            <person name="Corby N."/>
            <person name="Coulson A."/>
            <person name="Dhami P."/>
            <person name="Dutta I."/>
            <person name="Dunn M."/>
            <person name="Faulkner L."/>
            <person name="Frankish A."/>
            <person name="Frankland J.A."/>
            <person name="Garner P."/>
            <person name="Garnett J."/>
            <person name="Gribble S."/>
            <person name="Griffiths C."/>
            <person name="Grocock R."/>
            <person name="Gustafson E."/>
            <person name="Hammond S."/>
            <person name="Harley J.L."/>
            <person name="Hart E."/>
            <person name="Heath P.D."/>
            <person name="Ho T.P."/>
            <person name="Hopkins B."/>
            <person name="Horne J."/>
            <person name="Howden P.J."/>
            <person name="Huckle E."/>
            <person name="Hynds C."/>
            <person name="Johnson C."/>
            <person name="Johnson D."/>
            <person name="Kana A."/>
            <person name="Kay M."/>
            <person name="Kimberley A.M."/>
            <person name="Kershaw J.K."/>
            <person name="Kokkinaki M."/>
            <person name="Laird G.K."/>
            <person name="Lawlor S."/>
            <person name="Lee H.M."/>
            <person name="Leongamornlert D.A."/>
            <person name="Laird G."/>
            <person name="Lloyd C."/>
            <person name="Lloyd D.M."/>
            <person name="Loveland J."/>
            <person name="Lovell J."/>
            <person name="McLaren S."/>
            <person name="McLay K.E."/>
            <person name="McMurray A."/>
            <person name="Mashreghi-Mohammadi M."/>
            <person name="Matthews L."/>
            <person name="Milne S."/>
            <person name="Nickerson T."/>
            <person name="Nguyen M."/>
            <person name="Overton-Larty E."/>
            <person name="Palmer S.A."/>
            <person name="Pearce A.V."/>
            <person name="Peck A.I."/>
            <person name="Pelan S."/>
            <person name="Phillimore B."/>
            <person name="Porter K."/>
            <person name="Rice C.M."/>
            <person name="Rogosin A."/>
            <person name="Ross M.T."/>
            <person name="Sarafidou T."/>
            <person name="Sehra H.K."/>
            <person name="Shownkeen R."/>
            <person name="Skuce C.D."/>
            <person name="Smith M."/>
            <person name="Standring L."/>
            <person name="Sycamore N."/>
            <person name="Tester J."/>
            <person name="Thorpe A."/>
            <person name="Torcasso W."/>
            <person name="Tracey A."/>
            <person name="Tromans A."/>
            <person name="Tsolas J."/>
            <person name="Wall M."/>
            <person name="Walsh J."/>
            <person name="Wang H."/>
            <person name="Weinstock K."/>
            <person name="West A.P."/>
            <person name="Willey D.L."/>
            <person name="Whitehead S.L."/>
            <person name="Wilming L."/>
            <person name="Wray P.W."/>
            <person name="Young L."/>
            <person name="Chen Y."/>
            <person name="Lovering R.C."/>
            <person name="Moschonas N.K."/>
            <person name="Siebert R."/>
            <person name="Fechtel K."/>
            <person name="Bentley D."/>
            <person name="Durbin R.M."/>
            <person name="Hubbard T."/>
            <person name="Doucette-Stamm L."/>
            <person name="Beck S."/>
            <person name="Smith D.R."/>
            <person name="Rogers J."/>
        </authorList>
    </citation>
    <scope>NUCLEOTIDE SEQUENCE [LARGE SCALE GENOMIC DNA]</scope>
</reference>
<reference key="3">
    <citation type="submission" date="2005-07" db="EMBL/GenBank/DDBJ databases">
        <authorList>
            <person name="Mural R.J."/>
            <person name="Istrail S."/>
            <person name="Sutton G.G."/>
            <person name="Florea L."/>
            <person name="Halpern A.L."/>
            <person name="Mobarry C.M."/>
            <person name="Lippert R."/>
            <person name="Walenz B."/>
            <person name="Shatkay H."/>
            <person name="Dew I."/>
            <person name="Miller J.R."/>
            <person name="Flanigan M.J."/>
            <person name="Edwards N.J."/>
            <person name="Bolanos R."/>
            <person name="Fasulo D."/>
            <person name="Halldorsson B.V."/>
            <person name="Hannenhalli S."/>
            <person name="Turner R."/>
            <person name="Yooseph S."/>
            <person name="Lu F."/>
            <person name="Nusskern D.R."/>
            <person name="Shue B.C."/>
            <person name="Zheng X.H."/>
            <person name="Zhong F."/>
            <person name="Delcher A.L."/>
            <person name="Huson D.H."/>
            <person name="Kravitz S.A."/>
            <person name="Mouchard L."/>
            <person name="Reinert K."/>
            <person name="Remington K.A."/>
            <person name="Clark A.G."/>
            <person name="Waterman M.S."/>
            <person name="Eichler E.E."/>
            <person name="Adams M.D."/>
            <person name="Hunkapiller M.W."/>
            <person name="Myers E.W."/>
            <person name="Venter J.C."/>
        </authorList>
    </citation>
    <scope>NUCLEOTIDE SEQUENCE [LARGE SCALE GENOMIC DNA]</scope>
</reference>
<reference key="4">
    <citation type="journal article" date="2004" name="Genome Res.">
        <title>The status, quality, and expansion of the NIH full-length cDNA project: the Mammalian Gene Collection (MGC).</title>
        <authorList>
            <consortium name="The MGC Project Team"/>
        </authorList>
    </citation>
    <scope>NUCLEOTIDE SEQUENCE [LARGE SCALE MRNA] (ISOFORM A)</scope>
    <source>
        <tissue>Lung</tissue>
    </source>
</reference>
<reference key="5">
    <citation type="journal article" date="2008" name="Proc. Natl. Acad. Sci. U.S.A.">
        <title>A quantitative atlas of mitotic phosphorylation.</title>
        <authorList>
            <person name="Dephoure N."/>
            <person name="Zhou C."/>
            <person name="Villen J."/>
            <person name="Beausoleil S.A."/>
            <person name="Bakalarski C.E."/>
            <person name="Elledge S.J."/>
            <person name="Gygi S.P."/>
        </authorList>
    </citation>
    <scope>IDENTIFICATION BY MASS SPECTROMETRY [LARGE SCALE ANALYSIS]</scope>
    <source>
        <tissue>Cervix carcinoma</tissue>
    </source>
</reference>
<reference key="6">
    <citation type="journal article" date="2011" name="BMC Syst. Biol.">
        <title>Initial characterization of the human central proteome.</title>
        <authorList>
            <person name="Burkard T.R."/>
            <person name="Planyavsky M."/>
            <person name="Kaupe I."/>
            <person name="Breitwieser F.P."/>
            <person name="Buerckstuemmer T."/>
            <person name="Bennett K.L."/>
            <person name="Superti-Furga G."/>
            <person name="Colinge J."/>
        </authorList>
    </citation>
    <scope>IDENTIFICATION BY MASS SPECTROMETRY [LARGE SCALE ANALYSIS]</scope>
</reference>
<reference key="7">
    <citation type="journal article" date="2012" name="Proc. Natl. Acad. Sci. U.S.A.">
        <title>N-terminal acetylome analyses and functional insights of the N-terminal acetyltransferase NatB.</title>
        <authorList>
            <person name="Van Damme P."/>
            <person name="Lasa M."/>
            <person name="Polevoda B."/>
            <person name="Gazquez C."/>
            <person name="Elosegui-Artola A."/>
            <person name="Kim D.S."/>
            <person name="De Juan-Pardo E."/>
            <person name="Demeyer K."/>
            <person name="Hole K."/>
            <person name="Larrea E."/>
            <person name="Timmerman E."/>
            <person name="Prieto J."/>
            <person name="Arnesen T."/>
            <person name="Sherman F."/>
            <person name="Gevaert K."/>
            <person name="Aldabe R."/>
        </authorList>
    </citation>
    <scope>ACETYLATION [LARGE SCALE ANALYSIS] AT MET-1</scope>
    <scope>IDENTIFICATION BY MASS SPECTROMETRY [LARGE SCALE ANALYSIS]</scope>
</reference>
<reference key="8">
    <citation type="journal article" date="2013" name="J. Proteome Res.">
        <title>Toward a comprehensive characterization of a human cancer cell phosphoproteome.</title>
        <authorList>
            <person name="Zhou H."/>
            <person name="Di Palma S."/>
            <person name="Preisinger C."/>
            <person name="Peng M."/>
            <person name="Polat A.N."/>
            <person name="Heck A.J."/>
            <person name="Mohammed S."/>
        </authorList>
    </citation>
    <scope>PHOSPHORYLATION [LARGE SCALE ANALYSIS] AT SER-160</scope>
    <scope>IDENTIFICATION BY MASS SPECTROMETRY [LARGE SCALE ANALYSIS]</scope>
    <source>
        <tissue>Cervix carcinoma</tissue>
        <tissue>Erythroleukemia</tissue>
    </source>
</reference>
<reference key="9">
    <citation type="journal article" date="2014" name="Cell Stress Chaperones">
        <title>The co-chaperone DNAJC12 binds to Hsc70 and is upregulated by endoplasmic reticulum stress.</title>
        <authorList>
            <person name="Choi J."/>
            <person name="Djebbar S."/>
            <person name="Fournier A."/>
            <person name="Labrie C."/>
        </authorList>
    </citation>
    <scope>SUBCELLULAR LOCATION</scope>
    <scope>INDUCTION BY ER STRESS</scope>
    <scope>INTERACTION WITH HSPA8</scope>
</reference>
<reference key="10">
    <citation type="submission" date="2005-11" db="PDB data bank">
        <title>Solution structure of J-domain from human DnaJ subfamily C member 12.</title>
        <authorList>
            <consortium name="RIKEN structural genomics initiative (RSGI)"/>
        </authorList>
    </citation>
    <scope>STRUCTURE BY NMR OF 1-100</scope>
</reference>
<reference key="11">
    <citation type="journal article" date="2017" name="Am. J. Hum. Genet.">
        <title>Biallelic mutations in DNAJC12 cause hyperphenylalaninemia, dystonia, and intellectual disability.</title>
        <authorList>
            <person name="Anikster Y."/>
            <person name="Haack T.B."/>
            <person name="Vilboux T."/>
            <person name="Pode-Shakked B."/>
            <person name="Thoeny B."/>
            <person name="Shen N."/>
            <person name="Guarani V."/>
            <person name="Meissner T."/>
            <person name="Mayatepek E."/>
            <person name="Trefz F.K."/>
            <person name="Marek-Yagel D."/>
            <person name="Martinez A."/>
            <person name="Huttlin E.L."/>
            <person name="Paulo J.A."/>
            <person name="Berutti R."/>
            <person name="Benoist J.F."/>
            <person name="Imbard A."/>
            <person name="Dorboz I."/>
            <person name="Heimer G."/>
            <person name="Landau Y."/>
            <person name="Ziv-Strasser L."/>
            <person name="Malicdan M.C."/>
            <person name="Gemperle-Britschgi C."/>
            <person name="Cremer K."/>
            <person name="Engels H."/>
            <person name="Meili D."/>
            <person name="Keller I."/>
            <person name="Bruggmann R."/>
            <person name="Strom T.M."/>
            <person name="Meitinger T."/>
            <person name="Mullikin J.C."/>
            <person name="Schwartz G."/>
            <person name="Ben-Zeev B."/>
            <person name="Gahl W.A."/>
            <person name="Harper J.W."/>
            <person name="Blau N."/>
            <person name="Hoffmann G.F."/>
            <person name="Prokisch H."/>
            <person name="Opladen T."/>
            <person name="Schiff M."/>
        </authorList>
    </citation>
    <scope>VARIANT HPANBH4 PRO-72</scope>
    <scope>INVOLVEMENT IN HPANBH4</scope>
    <scope>CHARACTERIZATION OF VARIANT HPANBH4 PRO-72</scope>
    <scope>FUNCTION</scope>
</reference>
<reference key="12">
    <citation type="journal article" date="2017" name="J. Med. Genet.">
        <title>Heterogeneous clinical spectrum of DNAJC12-deficient hyperphenylalaninemia: from attention deficit to severe dystonia and intellectual disability.</title>
        <authorList>
            <person name="van Spronsen F.J."/>
            <person name="Himmelreich N."/>
            <person name="Ruefenacht V."/>
            <person name="Shen N."/>
            <person name="Vliet D.V."/>
            <person name="Al-Owain M."/>
            <person name="Ramzan K."/>
            <person name="Alkhalifi S.M."/>
            <person name="Lunsing R.J."/>
            <person name="Heiner-Fokkema R.M."/>
            <person name="Rassi A."/>
            <person name="Gemperle-Britschgi C."/>
            <person name="Hoffmann G.F."/>
            <person name="Blau N."/>
            <person name="Thoeny B."/>
        </authorList>
    </citation>
    <scope>VARIANT HPANBH4 72-ARG--ILE-198 DEL</scope>
    <scope>INVOLVEMENT IN HPANBH4</scope>
</reference>
<reference key="13">
    <citation type="journal article" date="2018" name="Eur. J. Hum. Genet.">
        <title>DNAJC12-associated developmental delay, movement disorder, and mild hyperphenylalaninemia identified by whole-exome sequencing re-analysis.</title>
        <authorList>
            <person name="Veenma D."/>
            <person name="Cordeiro D."/>
            <person name="Sondheimer N."/>
            <person name="Mercimek-Andrews S."/>
        </authorList>
    </citation>
    <scope>INVOLVEMENT IN HPANBH4</scope>
</reference>
<reference key="14">
    <citation type="journal article" date="2018" name="JIMD Rep.">
        <title>Beneficial Effect of BH4 Treatment in a 15-Year-Old Boy with Biallelic Mutations in DNAJC12.</title>
        <authorList>
            <person name="de Sain-van der Velden M.G.M."/>
            <person name="Kuper W.F.E."/>
            <person name="Kuijper M.A."/>
            <person name="van Kats L.A.T."/>
            <person name="Prinsen H.C.M.T."/>
            <person name="Balemans A.C.J."/>
            <person name="Visser G."/>
            <person name="van Gassen K.L.I."/>
            <person name="van Hasselt P.M."/>
        </authorList>
    </citation>
    <scope>INVOLVEMENT IN HPANBH4</scope>
</reference>
<reference key="15">
    <citation type="journal article" date="2019" name="Clin. Chim. Acta">
        <title>Identification of an inherited pathogenic DNAJC12 variant in a patient with hyperphenylalalinemia.</title>
        <authorList>
            <person name="Feng Y."/>
            <person name="Liu S."/>
            <person name="Tang C."/>
            <person name="Jiang X."/>
            <person name="Tang F."/>
            <person name="Li B."/>
            <person name="Jia X."/>
            <person name="Chen Q."/>
            <person name="Liu J."/>
            <person name="Huang Y."/>
        </authorList>
    </citation>
    <scope>INVOLVEMENT IN HPANBH4</scope>
</reference>
<reference key="16">
    <citation type="journal article" date="2020" name="Hum. Mutat.">
        <title>Pathogenic variants of DNAJC12 and evaluation of the encoded cochaperone as a genetic modifier of hyperphenylalaninemia.</title>
        <authorList>
            <person name="Gallego D."/>
            <person name="Leal F."/>
            <person name="Gamez A."/>
            <person name="Castro M."/>
            <person name="Navarrete R."/>
            <person name="Sanchez-Lijarcio O."/>
            <person name="Vitoria I."/>
            <person name="Bueno-Delgado M."/>
            <person name="Belanger-Quintana A."/>
            <person name="Morais A."/>
            <person name="Pedron-Giner C."/>
            <person name="Garcia I."/>
            <person name="Campistol J."/>
            <person name="Artuch R."/>
            <person name="Alcaide C."/>
            <person name="Cornejo V."/>
            <person name="Gil D."/>
            <person name="Yahyaoui R."/>
            <person name="Desviat L.R."/>
            <person name="Ugarte M."/>
            <person name="Martinez A."/>
            <person name="Perez B."/>
        </authorList>
    </citation>
    <scope>VARIANTS HPANBH4 CYS-103 AND 175-TRP--ILE-198 DEL</scope>
    <scope>INVOLVEMENT IN HPANBH4</scope>
    <scope>CHARACTERIZATION OF VARIANT HPANBH4 175-TRP--ILE-198 DEL</scope>
</reference>
<reference key="17">
    <citation type="journal article" date="2020" name="Mol. Genet. Genomic Med.">
        <title>Two novel mutations in DNAJC12 identified by whole-exome sequencing in a patient with mild hyperphenylalaninemia.</title>
        <authorList>
            <person name="Li M."/>
            <person name="Yang Q."/>
            <person name="Yi S."/>
            <person name="Qin Z."/>
            <person name="Luo J."/>
            <person name="Fan X."/>
        </authorList>
    </citation>
    <scope>VARIANT HPANBH4 GLN-102</scope>
    <scope>INVOLVEMENT IN HPANBH4</scope>
    <scope>FUNCTION</scope>
</reference>
<reference key="18">
    <citation type="journal article" date="2024" name="Int. J. Neonatal Screen.">
        <title>A Case of DNAJC12-Deficient Hyperphenylalaninemia Detected on Newborn Screening: Clinical Outcomes from Early Detection.</title>
        <authorList>
            <person name="Donnelly C."/>
            <person name="Estrella L."/>
            <person name="Ginevic I."/>
            <person name="Ganesh J."/>
        </authorList>
    </citation>
    <scope>VARIANT HPANBH4 79-ARG--ILE-198 DEL</scope>
    <scope>INVOLVEMENT IN HPANBH4</scope>
</reference>
<reference key="19">
    <citation type="journal article" date="2024" name="Int. J. Neonatal Screen.">
        <title>DNAJC12 Deficiency, an Emerging Condition Picked Up by Newborn Screening: A Case Illustration and a Novel Variant Identified.</title>
        <authorList>
            <person name="Wong T.S."/>
            <person name="Wong S.S.N."/>
            <person name="Kwok A.M.K."/>
            <person name="Wu H."/>
            <person name="Law H.F."/>
            <person name="Lam S."/>
            <person name="Yeung M.C.W."/>
            <person name="Chan T.C.H."/>
            <person name="Leung G."/>
            <person name="Mak C.M."/>
            <person name="Belaramani K.M."/>
            <person name="Fung C.W."/>
        </authorList>
    </citation>
    <scope>VARIANTS HPANBH4 GLU-62 AND 72-ARG--ILE-198 DEL</scope>
    <scope>INVOLVEMENT IN HPANBH4</scope>
</reference>
<accession>Q9UKB3</accession>
<accession>Q5JVQ1</accession>
<accession>Q9UKB2</accession>
<comment type="function">
    <text evidence="5 9">Probable co-chaperone that participates in the proper folding of biopterin-dependent aromatic amino acid hydroxylases, which include phenylalanine-4-hydroxylase (PAH), tyrosine 3-monooxygenase (TH) and peripheral and neuronal tryptophan hydroxylases (TPH1 and TPH2).</text>
</comment>
<comment type="subunit">
    <text evidence="1 4">Interacts with HSPA8 (PubMed:24122553). Interacts with TPH1 (By similarity). Interacts with TPH2 (By similarity).</text>
</comment>
<comment type="interaction">
    <interactant intactId="EBI-2689937">
        <id>Q9UKB3</id>
    </interactant>
    <interactant intactId="EBI-3956833">
        <id>P17752</id>
        <label>TPH1</label>
    </interactant>
    <organismsDiffer>false</organismsDiffer>
    <experiments>3</experiments>
</comment>
<comment type="subcellular location">
    <molecule>Isoform a</molecule>
    <subcellularLocation>
        <location evidence="4">Cytoplasm</location>
    </subcellularLocation>
</comment>
<comment type="alternative products">
    <event type="alternative splicing"/>
    <isoform>
        <id>Q9UKB3-1</id>
        <name>a</name>
        <name>JDP1a</name>
        <sequence type="displayed"/>
    </isoform>
    <isoform>
        <id>Q9UKB3-2</id>
        <name>B</name>
        <name>JDP1b</name>
        <sequence type="described" ref="VSP_001295 VSP_001296"/>
    </isoform>
</comment>
<comment type="tissue specificity">
    <text>Expressed at high levels in brain, heart, and testis, and at reduced levels in kidney and stomach.</text>
</comment>
<comment type="induction">
    <text evidence="4">Up-regulated by ER stress.</text>
</comment>
<comment type="disease" evidence="5 6 7 8 9 10 11 12">
    <disease id="DI-04966">
        <name>Hyperphenylalaninemia, mild, non-BH4-deficient</name>
        <acronym>HPANBH4</acronym>
        <description>An autosomal recessive disorder characterized by increased serum phenylalanine, normal BH4 metabolism, and highly variable neurologic defects, including movement abnormalities and intellectual disability.</description>
        <dbReference type="MIM" id="617384"/>
    </disease>
    <text>The disease is caused by variants affecting the gene represented in this entry.</text>
</comment>
<protein>
    <recommendedName>
        <fullName>DnaJ homolog subfamily C member 12</fullName>
    </recommendedName>
    <alternativeName>
        <fullName>J domain-containing protein 1</fullName>
    </alternativeName>
</protein>
<proteinExistence type="evidence at protein level"/>
<keyword id="KW-0002">3D-structure</keyword>
<keyword id="KW-0007">Acetylation</keyword>
<keyword id="KW-0025">Alternative splicing</keyword>
<keyword id="KW-0143">Chaperone</keyword>
<keyword id="KW-0963">Cytoplasm</keyword>
<keyword id="KW-0225">Disease variant</keyword>
<keyword id="KW-0597">Phosphoprotein</keyword>
<keyword id="KW-1267">Proteomics identification</keyword>
<keyword id="KW-1185">Reference proteome</keyword>